<evidence type="ECO:0000256" key="1">
    <source>
        <dbReference type="SAM" id="MobiDB-lite"/>
    </source>
</evidence>
<evidence type="ECO:0000269" key="2">
    <source>
    </source>
</evidence>
<evidence type="ECO:0000303" key="3">
    <source>
    </source>
</evidence>
<evidence type="ECO:0000305" key="4"/>
<evidence type="ECO:0000312" key="5">
    <source>
        <dbReference type="HGNC" id="HGNC:32480"/>
    </source>
</evidence>
<evidence type="ECO:0007829" key="6">
    <source>
        <dbReference type="PDB" id="4XBR"/>
    </source>
</evidence>
<protein>
    <recommendedName>
        <fullName evidence="4">PAK4-inhibitor INKA1</fullName>
    </recommendedName>
    <alternativeName>
        <fullName evidence="3">Induced in neural crest by AP2-alpha protein homolog</fullName>
        <shortName evidence="3">Inca</shortName>
    </alternativeName>
    <alternativeName>
        <fullName evidence="5">Inka-box actin regulator 1</fullName>
    </alternativeName>
</protein>
<accession>Q96EL1</accession>
<keyword id="KW-0002">3D-structure</keyword>
<keyword id="KW-0963">Cytoplasm</keyword>
<keyword id="KW-0539">Nucleus</keyword>
<keyword id="KW-1267">Proteomics identification</keyword>
<keyword id="KW-1185">Reference proteome</keyword>
<dbReference type="EMBL" id="AC139451">
    <property type="status" value="NOT_ANNOTATED_CDS"/>
    <property type="molecule type" value="Genomic_DNA"/>
</dbReference>
<dbReference type="EMBL" id="BC012170">
    <property type="protein sequence ID" value="AAH12170.2"/>
    <property type="molecule type" value="mRNA"/>
</dbReference>
<dbReference type="RefSeq" id="NP_976248.1">
    <property type="nucleotide sequence ID" value="NM_203370.1"/>
</dbReference>
<dbReference type="PDB" id="4XBR">
    <property type="method" value="X-ray"/>
    <property type="resolution" value="2.94 A"/>
    <property type="chains" value="A=168-205"/>
</dbReference>
<dbReference type="PDB" id="4XBU">
    <property type="method" value="X-ray"/>
    <property type="resolution" value="2.06 A"/>
    <property type="chains" value="B=169-192"/>
</dbReference>
<dbReference type="PDBsum" id="4XBR"/>
<dbReference type="PDBsum" id="4XBU"/>
<dbReference type="SMR" id="Q96EL1"/>
<dbReference type="BioGRID" id="132984">
    <property type="interactions" value="19"/>
</dbReference>
<dbReference type="FunCoup" id="Q96EL1">
    <property type="interactions" value="1362"/>
</dbReference>
<dbReference type="IntAct" id="Q96EL1">
    <property type="interactions" value="20"/>
</dbReference>
<dbReference type="STRING" id="9606.ENSP00000498241"/>
<dbReference type="iPTMnet" id="Q96EL1"/>
<dbReference type="PhosphoSitePlus" id="Q96EL1"/>
<dbReference type="BioMuta" id="FAM212A"/>
<dbReference type="jPOST" id="Q96EL1"/>
<dbReference type="MassIVE" id="Q96EL1"/>
<dbReference type="PaxDb" id="9606-ENSP00000329735"/>
<dbReference type="ProteomicsDB" id="76422"/>
<dbReference type="DNASU" id="389119"/>
<dbReference type="GeneID" id="389119"/>
<dbReference type="KEGG" id="hsa:389119"/>
<dbReference type="UCSC" id="uc003cxq.1">
    <property type="organism name" value="human"/>
</dbReference>
<dbReference type="AGR" id="HGNC:32480"/>
<dbReference type="CTD" id="389119"/>
<dbReference type="DisGeNET" id="389119"/>
<dbReference type="GeneCards" id="INKA1"/>
<dbReference type="HGNC" id="HGNC:32480">
    <property type="gene designation" value="INKA1"/>
</dbReference>
<dbReference type="MIM" id="620426">
    <property type="type" value="gene"/>
</dbReference>
<dbReference type="neXtProt" id="NX_Q96EL1"/>
<dbReference type="PharmGKB" id="PA143485330"/>
<dbReference type="eggNOG" id="ENOG502R5BS">
    <property type="taxonomic scope" value="Eukaryota"/>
</dbReference>
<dbReference type="HOGENOM" id="CLU_077157_0_0_1"/>
<dbReference type="InParanoid" id="Q96EL1"/>
<dbReference type="OrthoDB" id="8811265at2759"/>
<dbReference type="PAN-GO" id="Q96EL1">
    <property type="GO annotations" value="3 GO annotations based on evolutionary models"/>
</dbReference>
<dbReference type="PhylomeDB" id="Q96EL1"/>
<dbReference type="TreeFam" id="TF332839"/>
<dbReference type="PathwayCommons" id="Q96EL1"/>
<dbReference type="SignaLink" id="Q96EL1"/>
<dbReference type="BioGRID-ORCS" id="389119">
    <property type="hits" value="13 hits in 1156 CRISPR screens"/>
</dbReference>
<dbReference type="EvolutionaryTrace" id="Q96EL1"/>
<dbReference type="GenomeRNAi" id="389119"/>
<dbReference type="Pharos" id="Q96EL1">
    <property type="development level" value="Tdark"/>
</dbReference>
<dbReference type="PRO" id="PR:Q96EL1"/>
<dbReference type="Proteomes" id="UP000005640">
    <property type="component" value="Unplaced"/>
</dbReference>
<dbReference type="RNAct" id="Q96EL1">
    <property type="molecule type" value="protein"/>
</dbReference>
<dbReference type="GO" id="GO:0005737">
    <property type="term" value="C:cytoplasm"/>
    <property type="evidence" value="ECO:0000314"/>
    <property type="project" value="UniProtKB"/>
</dbReference>
<dbReference type="GO" id="GO:0005634">
    <property type="term" value="C:nucleus"/>
    <property type="evidence" value="ECO:0000314"/>
    <property type="project" value="UniProtKB"/>
</dbReference>
<dbReference type="GO" id="GO:0019901">
    <property type="term" value="F:protein kinase binding"/>
    <property type="evidence" value="ECO:0000353"/>
    <property type="project" value="UniProtKB"/>
</dbReference>
<dbReference type="GO" id="GO:0030291">
    <property type="term" value="F:protein serine/threonine kinase inhibitor activity"/>
    <property type="evidence" value="ECO:0000314"/>
    <property type="project" value="UniProtKB"/>
</dbReference>
<dbReference type="FunFam" id="3.30.200.20:FF:000407">
    <property type="entry name" value="Inka box actin regulator 1"/>
    <property type="match status" value="1"/>
</dbReference>
<dbReference type="Gene3D" id="3.30.200.20">
    <property type="entry name" value="Phosphorylase Kinase, domain 1"/>
    <property type="match status" value="1"/>
</dbReference>
<dbReference type="InterPro" id="IPR029267">
    <property type="entry name" value="FAM212"/>
</dbReference>
<dbReference type="InterPro" id="IPR039201">
    <property type="entry name" value="Inka"/>
</dbReference>
<dbReference type="PANTHER" id="PTHR28615:SF1">
    <property type="entry name" value="PAK4-INHIBITOR INKA1"/>
    <property type="match status" value="1"/>
</dbReference>
<dbReference type="PANTHER" id="PTHR28615">
    <property type="entry name" value="PAK4-INHIBITOR INKA1-RELATED"/>
    <property type="match status" value="1"/>
</dbReference>
<dbReference type="Pfam" id="PF15342">
    <property type="entry name" value="FAM212"/>
    <property type="match status" value="1"/>
</dbReference>
<organism>
    <name type="scientific">Homo sapiens</name>
    <name type="common">Human</name>
    <dbReference type="NCBI Taxonomy" id="9606"/>
    <lineage>
        <taxon>Eukaryota</taxon>
        <taxon>Metazoa</taxon>
        <taxon>Chordata</taxon>
        <taxon>Craniata</taxon>
        <taxon>Vertebrata</taxon>
        <taxon>Euteleostomi</taxon>
        <taxon>Mammalia</taxon>
        <taxon>Eutheria</taxon>
        <taxon>Euarchontoglires</taxon>
        <taxon>Primates</taxon>
        <taxon>Haplorrhini</taxon>
        <taxon>Catarrhini</taxon>
        <taxon>Hominidae</taxon>
        <taxon>Homo</taxon>
    </lineage>
</organism>
<name>INKA1_HUMAN</name>
<gene>
    <name evidence="5" type="primary">INKA1</name>
    <name evidence="5" type="synonym">C3orf54</name>
    <name evidence="5" type="synonym">FAM212A</name>
</gene>
<feature type="chain" id="PRO_0000239717" description="PAK4-inhibitor INKA1">
    <location>
        <begin position="1"/>
        <end position="287"/>
    </location>
</feature>
<feature type="region of interest" description="Disordered" evidence="1">
    <location>
        <begin position="22"/>
        <end position="59"/>
    </location>
</feature>
<feature type="region of interest" description="Disordered" evidence="1">
    <location>
        <begin position="138"/>
        <end position="157"/>
    </location>
</feature>
<feature type="region of interest" description="Inka box 1" evidence="2">
    <location>
        <begin position="168"/>
        <end position="205"/>
    </location>
</feature>
<feature type="region of interest" description="Inka box 2" evidence="2">
    <location>
        <begin position="261"/>
        <end position="287"/>
    </location>
</feature>
<feature type="compositionally biased region" description="Polar residues" evidence="1">
    <location>
        <begin position="35"/>
        <end position="50"/>
    </location>
</feature>
<feature type="compositionally biased region" description="Low complexity" evidence="1">
    <location>
        <begin position="138"/>
        <end position="147"/>
    </location>
</feature>
<feature type="strand" evidence="6">
    <location>
        <begin position="190"/>
        <end position="192"/>
    </location>
</feature>
<feature type="helix" evidence="6">
    <location>
        <begin position="193"/>
        <end position="196"/>
    </location>
</feature>
<comment type="function">
    <text evidence="2">Inhibitor of the serine/threonine-protein kinase PAK4 (PubMed:26607847). Acts by binding PAK4 in a substrate-like manner, inhibiting the protein kinase activity (PubMed:26607847).</text>
</comment>
<comment type="subunit">
    <text evidence="2">Interacts with PAK4 (PubMed:26607847).</text>
</comment>
<comment type="interaction">
    <interactant intactId="EBI-10285157">
        <id>Q96EL1</id>
    </interactant>
    <interactant intactId="EBI-8643161">
        <id>Q9NX04</id>
        <label>AIRIM</label>
    </interactant>
    <organismsDiffer>false</organismsDiffer>
    <experiments>3</experiments>
</comment>
<comment type="interaction">
    <interactant intactId="EBI-10285157">
        <id>Q96EL1</id>
    </interactant>
    <interactant intactId="EBI-11532900">
        <id>J3KQ12</id>
        <label>BSCL2</label>
    </interactant>
    <organismsDiffer>false</organismsDiffer>
    <experiments>3</experiments>
</comment>
<comment type="interaction">
    <interactant intactId="EBI-10285157">
        <id>Q96EL1</id>
    </interactant>
    <interactant intactId="EBI-351257">
        <id>P26196</id>
        <label>DDX6</label>
    </interactant>
    <organismsDiffer>false</organismsDiffer>
    <experiments>3</experiments>
</comment>
<comment type="interaction">
    <interactant intactId="EBI-10285157">
        <id>Q96EL1</id>
    </interactant>
    <interactant intactId="EBI-10976677">
        <id>G5E9A7</id>
        <label>DMWD</label>
    </interactant>
    <organismsDiffer>false</organismsDiffer>
    <experiments>3</experiments>
</comment>
<comment type="interaction">
    <interactant intactId="EBI-10285157">
        <id>Q96EL1</id>
    </interactant>
    <interactant intactId="EBI-751540">
        <id>O95872</id>
        <label>GPANK1</label>
    </interactant>
    <organismsDiffer>false</organismsDiffer>
    <experiments>3</experiments>
</comment>
<comment type="interaction">
    <interactant intactId="EBI-10285157">
        <id>Q96EL1</id>
    </interactant>
    <interactant intactId="EBI-8472129">
        <id>Q9HAQ2</id>
        <label>KIF9</label>
    </interactant>
    <organismsDiffer>false</organismsDiffer>
    <experiments>3</experiments>
</comment>
<comment type="interaction">
    <interactant intactId="EBI-10285157">
        <id>Q96EL1</id>
    </interactant>
    <interactant intactId="EBI-351935">
        <id>P02545</id>
        <label>LMNA</label>
    </interactant>
    <organismsDiffer>false</organismsDiffer>
    <experiments>3</experiments>
</comment>
<comment type="interaction">
    <interactant intactId="EBI-10285157">
        <id>Q96EL1</id>
    </interactant>
    <interactant intactId="EBI-713738">
        <id>O96013</id>
        <label>PAK4</label>
    </interactant>
    <organismsDiffer>false</organismsDiffer>
    <experiments>4</experiments>
</comment>
<comment type="interaction">
    <interactant intactId="EBI-10285157">
        <id>Q96EL1</id>
    </interactant>
    <interactant intactId="EBI-741896">
        <id>Q9P286</id>
        <label>PAK5</label>
    </interactant>
    <organismsDiffer>false</organismsDiffer>
    <experiments>5</experiments>
</comment>
<comment type="interaction">
    <interactant intactId="EBI-10285157">
        <id>Q96EL1</id>
    </interactant>
    <interactant intactId="EBI-25882083">
        <id>O00628-2</id>
        <label>PEX7</label>
    </interactant>
    <organismsDiffer>false</organismsDiffer>
    <experiments>3</experiments>
</comment>
<comment type="interaction">
    <interactant intactId="EBI-10285157">
        <id>Q96EL1</id>
    </interactant>
    <interactant intactId="EBI-5235340">
        <id>Q7Z699</id>
        <label>SPRED1</label>
    </interactant>
    <organismsDiffer>false</organismsDiffer>
    <experiments>3</experiments>
</comment>
<comment type="interaction">
    <interactant intactId="EBI-10285157">
        <id>Q96EL1</id>
    </interactant>
    <interactant intactId="EBI-740727">
        <id>Q8TAU3</id>
        <label>ZNF417</label>
    </interactant>
    <organismsDiffer>false</organismsDiffer>
    <experiments>3</experiments>
</comment>
<comment type="subcellular location">
    <subcellularLocation>
        <location evidence="2">Nucleus</location>
    </subcellularLocation>
    <subcellularLocation>
        <location evidence="2">Cytoplasm</location>
    </subcellularLocation>
    <text evidence="2">Mainly nuclear (PubMed:26607847). Relocalizes to the cytoplasm following interaction with PAK4 (PubMed:26607847).</text>
</comment>
<comment type="domain">
    <text evidence="2">Contains 2 Inka boxes (also named iBox or inca box) (PubMed:26607847). The Inka boxes bind and inhibit PAK4 by binding a substrate-like manner (PubMed:26607847).</text>
</comment>
<comment type="similarity">
    <text evidence="4">Belongs to the INKA family.</text>
</comment>
<comment type="caution">
    <text evidence="4">It is uncertain whether Met-1 or Met-3 is the initiator.</text>
</comment>
<sequence length="287" mass="31574">MDMHSARLDSFLSQLRWELLCGRDTGSPSMPGPLQPTSQTGPDVQPSHQLRASGALEEDSVCCVEEEEEEEEEAVVTEDRDAALGGPREHALDWDSGFSEVSGSTWREEELPVSQRPAPSAQPLRRQCLSVSGLPMPSRAPVASVPPVHHPRPKSTPDACLEHWQGLEAEDWTAALLNRGRSRQPLVLGDNCFADLVHNWMELPETGSEGGDGGGHRARARPPQFLLGLSEQLRRRLARARRTAMAGKRLSCPPRPEPELPADVSRFAALMSCRSRQPIICNDVSYL</sequence>
<reference key="1">
    <citation type="journal article" date="2006" name="Nature">
        <title>The DNA sequence, annotation and analysis of human chromosome 3.</title>
        <authorList>
            <person name="Muzny D.M."/>
            <person name="Scherer S.E."/>
            <person name="Kaul R."/>
            <person name="Wang J."/>
            <person name="Yu J."/>
            <person name="Sudbrak R."/>
            <person name="Buhay C.J."/>
            <person name="Chen R."/>
            <person name="Cree A."/>
            <person name="Ding Y."/>
            <person name="Dugan-Rocha S."/>
            <person name="Gill R."/>
            <person name="Gunaratne P."/>
            <person name="Harris R.A."/>
            <person name="Hawes A.C."/>
            <person name="Hernandez J."/>
            <person name="Hodgson A.V."/>
            <person name="Hume J."/>
            <person name="Jackson A."/>
            <person name="Khan Z.M."/>
            <person name="Kovar-Smith C."/>
            <person name="Lewis L.R."/>
            <person name="Lozado R.J."/>
            <person name="Metzker M.L."/>
            <person name="Milosavljevic A."/>
            <person name="Miner G.R."/>
            <person name="Morgan M.B."/>
            <person name="Nazareth L.V."/>
            <person name="Scott G."/>
            <person name="Sodergren E."/>
            <person name="Song X.-Z."/>
            <person name="Steffen D."/>
            <person name="Wei S."/>
            <person name="Wheeler D.A."/>
            <person name="Wright M.W."/>
            <person name="Worley K.C."/>
            <person name="Yuan Y."/>
            <person name="Zhang Z."/>
            <person name="Adams C.Q."/>
            <person name="Ansari-Lari M.A."/>
            <person name="Ayele M."/>
            <person name="Brown M.J."/>
            <person name="Chen G."/>
            <person name="Chen Z."/>
            <person name="Clendenning J."/>
            <person name="Clerc-Blankenburg K.P."/>
            <person name="Chen R."/>
            <person name="Chen Z."/>
            <person name="Davis C."/>
            <person name="Delgado O."/>
            <person name="Dinh H.H."/>
            <person name="Dong W."/>
            <person name="Draper H."/>
            <person name="Ernst S."/>
            <person name="Fu G."/>
            <person name="Gonzalez-Garay M.L."/>
            <person name="Garcia D.K."/>
            <person name="Gillett W."/>
            <person name="Gu J."/>
            <person name="Hao B."/>
            <person name="Haugen E."/>
            <person name="Havlak P."/>
            <person name="He X."/>
            <person name="Hennig S."/>
            <person name="Hu S."/>
            <person name="Huang W."/>
            <person name="Jackson L.R."/>
            <person name="Jacob L.S."/>
            <person name="Kelly S.H."/>
            <person name="Kube M."/>
            <person name="Levy R."/>
            <person name="Li Z."/>
            <person name="Liu B."/>
            <person name="Liu J."/>
            <person name="Liu W."/>
            <person name="Lu J."/>
            <person name="Maheshwari M."/>
            <person name="Nguyen B.-V."/>
            <person name="Okwuonu G.O."/>
            <person name="Palmeiri A."/>
            <person name="Pasternak S."/>
            <person name="Perez L.M."/>
            <person name="Phelps K.A."/>
            <person name="Plopper F.J."/>
            <person name="Qiang B."/>
            <person name="Raymond C."/>
            <person name="Rodriguez R."/>
            <person name="Saenphimmachak C."/>
            <person name="Santibanez J."/>
            <person name="Shen H."/>
            <person name="Shen Y."/>
            <person name="Subramanian S."/>
            <person name="Tabor P.E."/>
            <person name="Verduzco D."/>
            <person name="Waldron L."/>
            <person name="Wang J."/>
            <person name="Wang J."/>
            <person name="Wang Q."/>
            <person name="Williams G.A."/>
            <person name="Wong G.K.-S."/>
            <person name="Yao Z."/>
            <person name="Zhang J."/>
            <person name="Zhang X."/>
            <person name="Zhao G."/>
            <person name="Zhou J."/>
            <person name="Zhou Y."/>
            <person name="Nelson D."/>
            <person name="Lehrach H."/>
            <person name="Reinhardt R."/>
            <person name="Naylor S.L."/>
            <person name="Yang H."/>
            <person name="Olson M."/>
            <person name="Weinstock G."/>
            <person name="Gibbs R.A."/>
        </authorList>
    </citation>
    <scope>NUCLEOTIDE SEQUENCE [LARGE SCALE GENOMIC DNA]</scope>
</reference>
<reference key="2">
    <citation type="journal article" date="2004" name="Genome Res.">
        <title>The status, quality, and expansion of the NIH full-length cDNA project: the Mammalian Gene Collection (MGC).</title>
        <authorList>
            <consortium name="The MGC Project Team"/>
        </authorList>
    </citation>
    <scope>NUCLEOTIDE SEQUENCE [LARGE SCALE MRNA]</scope>
    <source>
        <tissue>Skin</tissue>
    </source>
</reference>
<reference key="3">
    <citation type="journal article" date="2007" name="Development">
        <title>Inca: a novel p21-activated kinase-associated protein required for cranial neural crest development.</title>
        <authorList>
            <person name="Luo T."/>
            <person name="Xu Y."/>
            <person name="Hoffman T.L."/>
            <person name="Zhang T."/>
            <person name="Schilling T."/>
            <person name="Sargent T.D."/>
        </authorList>
    </citation>
    <scope>IDENTIFICATION</scope>
</reference>
<reference key="4">
    <citation type="journal article" date="2015" name="Nat. Commun.">
        <title>An in cellulo-derived structure of PAK4 in complex with its inhibitor Inka1.</title>
        <authorList>
            <person name="Baskaran Y."/>
            <person name="Ang K.C."/>
            <person name="Anekal P.V."/>
            <person name="Chan W.L."/>
            <person name="Grimes J.M."/>
            <person name="Manser E."/>
            <person name="Robinson R.C."/>
        </authorList>
    </citation>
    <scope>X-RAY CRYSTALLOGRAPHY (2.06 ANGSTROMS) OF 169-192 IN COMPLEX WITH PAK4</scope>
    <scope>FUNCTION</scope>
    <scope>SUBCELLULAR LOCATION</scope>
    <scope>DOMAIN</scope>
    <scope>INTERACTION WITH PAK4</scope>
</reference>
<proteinExistence type="evidence at protein level"/>